<sequence length="233" mass="26009">MPAKQRTAKVNRNPDLIRGVGKYSRSQMYHKRGLWAIKAKNGGVFPRHDAKSKVDAPVEKPPKFYPAEDVKKPLPNRRTAKPAKLRASITPGTVLIILAGRFKGKRVVFLKQLASGLLLVTGPFKINGVPLRRVNQAYVIGTSTKVDISGVTLDKFDDKYFGKVAEKKKKKTEGEFFEAEKEEKKEIPQGKKDDQKAVDAALIKAIEAVPELKTYLGARFSLKQGMKPHELVF</sequence>
<keyword id="KW-1185">Reference proteome</keyword>
<keyword id="KW-0687">Ribonucleoprotein</keyword>
<keyword id="KW-0689">Ribosomal protein</keyword>
<comment type="similarity">
    <text evidence="3">Belongs to the eukaryotic ribosomal protein eL6 family.</text>
</comment>
<name>RL62_ARATH</name>
<organism>
    <name type="scientific">Arabidopsis thaliana</name>
    <name type="common">Mouse-ear cress</name>
    <dbReference type="NCBI Taxonomy" id="3702"/>
    <lineage>
        <taxon>Eukaryota</taxon>
        <taxon>Viridiplantae</taxon>
        <taxon>Streptophyta</taxon>
        <taxon>Embryophyta</taxon>
        <taxon>Tracheophyta</taxon>
        <taxon>Spermatophyta</taxon>
        <taxon>Magnoliopsida</taxon>
        <taxon>eudicotyledons</taxon>
        <taxon>Gunneridae</taxon>
        <taxon>Pentapetalae</taxon>
        <taxon>rosids</taxon>
        <taxon>malvids</taxon>
        <taxon>Brassicales</taxon>
        <taxon>Brassicaceae</taxon>
        <taxon>Camelineae</taxon>
        <taxon>Arabidopsis</taxon>
    </lineage>
</organism>
<evidence type="ECO:0000256" key="1">
    <source>
        <dbReference type="SAM" id="MobiDB-lite"/>
    </source>
</evidence>
<evidence type="ECO:0000303" key="2">
    <source>
    </source>
</evidence>
<evidence type="ECO:0000305" key="3"/>
<gene>
    <name type="primary">RPL6B</name>
    <name type="ordered locus">At1g74060</name>
    <name type="ORF">F2P9.7</name>
</gene>
<dbReference type="EMBL" id="AC016662">
    <property type="protein sequence ID" value="AAG52524.1"/>
    <property type="molecule type" value="Genomic_DNA"/>
</dbReference>
<dbReference type="EMBL" id="CP002684">
    <property type="protein sequence ID" value="AEE35544.1"/>
    <property type="molecule type" value="Genomic_DNA"/>
</dbReference>
<dbReference type="EMBL" id="AY062622">
    <property type="protein sequence ID" value="AAL32700.1"/>
    <property type="molecule type" value="mRNA"/>
</dbReference>
<dbReference type="EMBL" id="BT002588">
    <property type="protein sequence ID" value="AAO00948.1"/>
    <property type="molecule type" value="mRNA"/>
</dbReference>
<dbReference type="PIR" id="E96768">
    <property type="entry name" value="E96768"/>
</dbReference>
<dbReference type="RefSeq" id="NP_177546.1">
    <property type="nucleotide sequence ID" value="NM_106066.6"/>
</dbReference>
<dbReference type="SMR" id="Q9C9C6"/>
<dbReference type="BioGRID" id="28965">
    <property type="interactions" value="155"/>
</dbReference>
<dbReference type="FunCoup" id="Q9C9C6">
    <property type="interactions" value="4026"/>
</dbReference>
<dbReference type="STRING" id="3702.Q9C9C6"/>
<dbReference type="GlyGen" id="Q9C9C6">
    <property type="glycosylation" value="1 site"/>
</dbReference>
<dbReference type="iPTMnet" id="Q9C9C6"/>
<dbReference type="PaxDb" id="3702-AT1G74060.1"/>
<dbReference type="ProteomicsDB" id="226838"/>
<dbReference type="EnsemblPlants" id="AT1G74060.1">
    <property type="protein sequence ID" value="AT1G74060.1"/>
    <property type="gene ID" value="AT1G74060"/>
</dbReference>
<dbReference type="GeneID" id="843746"/>
<dbReference type="Gramene" id="AT1G74060.1">
    <property type="protein sequence ID" value="AT1G74060.1"/>
    <property type="gene ID" value="AT1G74060"/>
</dbReference>
<dbReference type="KEGG" id="ath:AT1G74060"/>
<dbReference type="Araport" id="AT1G74060"/>
<dbReference type="TAIR" id="AT1G74060"/>
<dbReference type="eggNOG" id="KOG1694">
    <property type="taxonomic scope" value="Eukaryota"/>
</dbReference>
<dbReference type="HOGENOM" id="CLU_066767_1_0_1"/>
<dbReference type="InParanoid" id="Q9C9C6"/>
<dbReference type="OMA" id="YWAREKT"/>
<dbReference type="PhylomeDB" id="Q9C9C6"/>
<dbReference type="CD-CODE" id="4299E36E">
    <property type="entry name" value="Nucleolus"/>
</dbReference>
<dbReference type="PRO" id="PR:Q9C9C6"/>
<dbReference type="Proteomes" id="UP000006548">
    <property type="component" value="Chromosome 1"/>
</dbReference>
<dbReference type="ExpressionAtlas" id="Q9C9C6">
    <property type="expression patterns" value="baseline and differential"/>
</dbReference>
<dbReference type="GO" id="GO:0022625">
    <property type="term" value="C:cytosolic large ribosomal subunit"/>
    <property type="evidence" value="ECO:0007005"/>
    <property type="project" value="TAIR"/>
</dbReference>
<dbReference type="GO" id="GO:0022626">
    <property type="term" value="C:cytosolic ribosome"/>
    <property type="evidence" value="ECO:0007005"/>
    <property type="project" value="TAIR"/>
</dbReference>
<dbReference type="GO" id="GO:0005739">
    <property type="term" value="C:mitochondrion"/>
    <property type="evidence" value="ECO:0007005"/>
    <property type="project" value="TAIR"/>
</dbReference>
<dbReference type="GO" id="GO:0005730">
    <property type="term" value="C:nucleolus"/>
    <property type="evidence" value="ECO:0007005"/>
    <property type="project" value="TAIR"/>
</dbReference>
<dbReference type="GO" id="GO:0003729">
    <property type="term" value="F:mRNA binding"/>
    <property type="evidence" value="ECO:0000314"/>
    <property type="project" value="TAIR"/>
</dbReference>
<dbReference type="GO" id="GO:0003735">
    <property type="term" value="F:structural constituent of ribosome"/>
    <property type="evidence" value="ECO:0000314"/>
    <property type="project" value="CAFA"/>
</dbReference>
<dbReference type="GO" id="GO:0006412">
    <property type="term" value="P:translation"/>
    <property type="evidence" value="ECO:0007669"/>
    <property type="project" value="InterPro"/>
</dbReference>
<dbReference type="CDD" id="cd13156">
    <property type="entry name" value="KOW_RPL6"/>
    <property type="match status" value="1"/>
</dbReference>
<dbReference type="FunFam" id="2.30.30.30:FF:000014">
    <property type="entry name" value="60S ribosomal protein L6"/>
    <property type="match status" value="1"/>
</dbReference>
<dbReference type="Gene3D" id="2.30.30.30">
    <property type="match status" value="1"/>
</dbReference>
<dbReference type="InterPro" id="IPR000915">
    <property type="entry name" value="60S_ribosomal_eL6"/>
</dbReference>
<dbReference type="InterPro" id="IPR014722">
    <property type="entry name" value="Rib_uL2_dom2"/>
</dbReference>
<dbReference type="InterPro" id="IPR041997">
    <property type="entry name" value="Ribosomal_eL6_KOW"/>
</dbReference>
<dbReference type="InterPro" id="IPR005568">
    <property type="entry name" value="Ribosomal_uL6_N"/>
</dbReference>
<dbReference type="InterPro" id="IPR008991">
    <property type="entry name" value="Translation_prot_SH3-like_sf"/>
</dbReference>
<dbReference type="PANTHER" id="PTHR10715">
    <property type="entry name" value="60S RIBOSOMAL PROTEIN L6"/>
    <property type="match status" value="1"/>
</dbReference>
<dbReference type="PANTHER" id="PTHR10715:SF10">
    <property type="entry name" value="LARGE RIBOSOMAL SUBUNIT PROTEIN EL6X-RELATED"/>
    <property type="match status" value="1"/>
</dbReference>
<dbReference type="Pfam" id="PF01159">
    <property type="entry name" value="Ribosomal_L6e"/>
    <property type="match status" value="1"/>
</dbReference>
<dbReference type="Pfam" id="PF03868">
    <property type="entry name" value="Ribosomal_L6e_N"/>
    <property type="match status" value="1"/>
</dbReference>
<dbReference type="SUPFAM" id="SSF50104">
    <property type="entry name" value="Translation proteins SH3-like domain"/>
    <property type="match status" value="1"/>
</dbReference>
<feature type="chain" id="PRO_0000239922" description="Large ribosomal subunit protein eL6y">
    <location>
        <begin position="1"/>
        <end position="233"/>
    </location>
</feature>
<feature type="region of interest" description="Disordered" evidence="1">
    <location>
        <begin position="48"/>
        <end position="82"/>
    </location>
</feature>
<feature type="compositionally biased region" description="Basic and acidic residues" evidence="1">
    <location>
        <begin position="48"/>
        <end position="72"/>
    </location>
</feature>
<reference key="1">
    <citation type="journal article" date="2000" name="Nature">
        <title>Sequence and analysis of chromosome 1 of the plant Arabidopsis thaliana.</title>
        <authorList>
            <person name="Theologis A."/>
            <person name="Ecker J.R."/>
            <person name="Palm C.J."/>
            <person name="Federspiel N.A."/>
            <person name="Kaul S."/>
            <person name="White O."/>
            <person name="Alonso J."/>
            <person name="Altafi H."/>
            <person name="Araujo R."/>
            <person name="Bowman C.L."/>
            <person name="Brooks S.Y."/>
            <person name="Buehler E."/>
            <person name="Chan A."/>
            <person name="Chao Q."/>
            <person name="Chen H."/>
            <person name="Cheuk R.F."/>
            <person name="Chin C.W."/>
            <person name="Chung M.K."/>
            <person name="Conn L."/>
            <person name="Conway A.B."/>
            <person name="Conway A.R."/>
            <person name="Creasy T.H."/>
            <person name="Dewar K."/>
            <person name="Dunn P."/>
            <person name="Etgu P."/>
            <person name="Feldblyum T.V."/>
            <person name="Feng J.-D."/>
            <person name="Fong B."/>
            <person name="Fujii C.Y."/>
            <person name="Gill J.E."/>
            <person name="Goldsmith A.D."/>
            <person name="Haas B."/>
            <person name="Hansen N.F."/>
            <person name="Hughes B."/>
            <person name="Huizar L."/>
            <person name="Hunter J.L."/>
            <person name="Jenkins J."/>
            <person name="Johnson-Hopson C."/>
            <person name="Khan S."/>
            <person name="Khaykin E."/>
            <person name="Kim C.J."/>
            <person name="Koo H.L."/>
            <person name="Kremenetskaia I."/>
            <person name="Kurtz D.B."/>
            <person name="Kwan A."/>
            <person name="Lam B."/>
            <person name="Langin-Hooper S."/>
            <person name="Lee A."/>
            <person name="Lee J.M."/>
            <person name="Lenz C.A."/>
            <person name="Li J.H."/>
            <person name="Li Y.-P."/>
            <person name="Lin X."/>
            <person name="Liu S.X."/>
            <person name="Liu Z.A."/>
            <person name="Luros J.S."/>
            <person name="Maiti R."/>
            <person name="Marziali A."/>
            <person name="Militscher J."/>
            <person name="Miranda M."/>
            <person name="Nguyen M."/>
            <person name="Nierman W.C."/>
            <person name="Osborne B.I."/>
            <person name="Pai G."/>
            <person name="Peterson J."/>
            <person name="Pham P.K."/>
            <person name="Rizzo M."/>
            <person name="Rooney T."/>
            <person name="Rowley D."/>
            <person name="Sakano H."/>
            <person name="Salzberg S.L."/>
            <person name="Schwartz J.R."/>
            <person name="Shinn P."/>
            <person name="Southwick A.M."/>
            <person name="Sun H."/>
            <person name="Tallon L.J."/>
            <person name="Tambunga G."/>
            <person name="Toriumi M.J."/>
            <person name="Town C.D."/>
            <person name="Utterback T."/>
            <person name="Van Aken S."/>
            <person name="Vaysberg M."/>
            <person name="Vysotskaia V.S."/>
            <person name="Walker M."/>
            <person name="Wu D."/>
            <person name="Yu G."/>
            <person name="Fraser C.M."/>
            <person name="Venter J.C."/>
            <person name="Davis R.W."/>
        </authorList>
    </citation>
    <scope>NUCLEOTIDE SEQUENCE [LARGE SCALE GENOMIC DNA]</scope>
    <source>
        <strain>cv. Columbia</strain>
    </source>
</reference>
<reference key="2">
    <citation type="journal article" date="2017" name="Plant J.">
        <title>Araport11: a complete reannotation of the Arabidopsis thaliana reference genome.</title>
        <authorList>
            <person name="Cheng C.Y."/>
            <person name="Krishnakumar V."/>
            <person name="Chan A.P."/>
            <person name="Thibaud-Nissen F."/>
            <person name="Schobel S."/>
            <person name="Town C.D."/>
        </authorList>
    </citation>
    <scope>GENOME REANNOTATION</scope>
    <source>
        <strain>cv. Columbia</strain>
    </source>
</reference>
<reference key="3">
    <citation type="journal article" date="2003" name="Science">
        <title>Empirical analysis of transcriptional activity in the Arabidopsis genome.</title>
        <authorList>
            <person name="Yamada K."/>
            <person name="Lim J."/>
            <person name="Dale J.M."/>
            <person name="Chen H."/>
            <person name="Shinn P."/>
            <person name="Palm C.J."/>
            <person name="Southwick A.M."/>
            <person name="Wu H.C."/>
            <person name="Kim C.J."/>
            <person name="Nguyen M."/>
            <person name="Pham P.K."/>
            <person name="Cheuk R.F."/>
            <person name="Karlin-Newmann G."/>
            <person name="Liu S.X."/>
            <person name="Lam B."/>
            <person name="Sakano H."/>
            <person name="Wu T."/>
            <person name="Yu G."/>
            <person name="Miranda M."/>
            <person name="Quach H.L."/>
            <person name="Tripp M."/>
            <person name="Chang C.H."/>
            <person name="Lee J.M."/>
            <person name="Toriumi M.J."/>
            <person name="Chan M.M."/>
            <person name="Tang C.C."/>
            <person name="Onodera C.S."/>
            <person name="Deng J.M."/>
            <person name="Akiyama K."/>
            <person name="Ansari Y."/>
            <person name="Arakawa T."/>
            <person name="Banh J."/>
            <person name="Banno F."/>
            <person name="Bowser L."/>
            <person name="Brooks S.Y."/>
            <person name="Carninci P."/>
            <person name="Chao Q."/>
            <person name="Choy N."/>
            <person name="Enju A."/>
            <person name="Goldsmith A.D."/>
            <person name="Gurjal M."/>
            <person name="Hansen N.F."/>
            <person name="Hayashizaki Y."/>
            <person name="Johnson-Hopson C."/>
            <person name="Hsuan V.W."/>
            <person name="Iida K."/>
            <person name="Karnes M."/>
            <person name="Khan S."/>
            <person name="Koesema E."/>
            <person name="Ishida J."/>
            <person name="Jiang P.X."/>
            <person name="Jones T."/>
            <person name="Kawai J."/>
            <person name="Kamiya A."/>
            <person name="Meyers C."/>
            <person name="Nakajima M."/>
            <person name="Narusaka M."/>
            <person name="Seki M."/>
            <person name="Sakurai T."/>
            <person name="Satou M."/>
            <person name="Tamse R."/>
            <person name="Vaysberg M."/>
            <person name="Wallender E.K."/>
            <person name="Wong C."/>
            <person name="Yamamura Y."/>
            <person name="Yuan S."/>
            <person name="Shinozaki K."/>
            <person name="Davis R.W."/>
            <person name="Theologis A."/>
            <person name="Ecker J.R."/>
        </authorList>
    </citation>
    <scope>NUCLEOTIDE SEQUENCE [LARGE SCALE MRNA]</scope>
    <source>
        <strain>cv. Columbia</strain>
    </source>
</reference>
<reference key="4">
    <citation type="journal article" date="2001" name="Plant Physiol.">
        <title>The organization of cytoplasmic ribosomal protein genes in the Arabidopsis genome.</title>
        <authorList>
            <person name="Barakat A."/>
            <person name="Szick-Miranda K."/>
            <person name="Chang I.-F."/>
            <person name="Guyot R."/>
            <person name="Blanc G."/>
            <person name="Cooke R."/>
            <person name="Delseny M."/>
            <person name="Bailey-Serres J."/>
        </authorList>
    </citation>
    <scope>GENE FAMILY ORGANIZATION</scope>
    <scope>NOMENCLATURE</scope>
</reference>
<reference key="5">
    <citation type="journal article" date="2023" name="Plant Cell">
        <title>An updated nomenclature for plant ribosomal protein genes.</title>
        <authorList>
            <person name="Scarpin M.R."/>
            <person name="Busche M."/>
            <person name="Martinez R.E."/>
            <person name="Harper L.C."/>
            <person name="Reiser L."/>
            <person name="Szakonyi D."/>
            <person name="Merchante C."/>
            <person name="Lan T."/>
            <person name="Xiong W."/>
            <person name="Mo B."/>
            <person name="Tang G."/>
            <person name="Chen X."/>
            <person name="Bailey-Serres J."/>
            <person name="Browning K.S."/>
            <person name="Brunkard J.O."/>
        </authorList>
    </citation>
    <scope>NOMENCLATURE</scope>
</reference>
<protein>
    <recommendedName>
        <fullName evidence="2">Large ribosomal subunit protein eL6y</fullName>
    </recommendedName>
    <alternativeName>
        <fullName>60S ribosomal protein L6-2</fullName>
    </alternativeName>
</protein>
<accession>Q9C9C6</accession>
<proteinExistence type="evidence at transcript level"/>